<accession>Q2GK22</accession>
<gene>
    <name evidence="1" type="primary">rplU</name>
    <name type="ordered locus">APH_0697</name>
</gene>
<proteinExistence type="inferred from homology"/>
<dbReference type="EMBL" id="CP000235">
    <property type="protein sequence ID" value="ABD43486.1"/>
    <property type="molecule type" value="Genomic_DNA"/>
</dbReference>
<dbReference type="RefSeq" id="WP_011450800.1">
    <property type="nucleotide sequence ID" value="NC_007797.1"/>
</dbReference>
<dbReference type="SMR" id="Q2GK22"/>
<dbReference type="STRING" id="212042.APH_0697"/>
<dbReference type="PaxDb" id="212042-APH_0697"/>
<dbReference type="EnsemblBacteria" id="ABD43486">
    <property type="protein sequence ID" value="ABD43486"/>
    <property type="gene ID" value="APH_0697"/>
</dbReference>
<dbReference type="GeneID" id="92748240"/>
<dbReference type="KEGG" id="aph:APH_0697"/>
<dbReference type="eggNOG" id="COG0261">
    <property type="taxonomic scope" value="Bacteria"/>
</dbReference>
<dbReference type="HOGENOM" id="CLU_061463_3_2_5"/>
<dbReference type="Proteomes" id="UP000001943">
    <property type="component" value="Chromosome"/>
</dbReference>
<dbReference type="GO" id="GO:0005737">
    <property type="term" value="C:cytoplasm"/>
    <property type="evidence" value="ECO:0007669"/>
    <property type="project" value="UniProtKB-ARBA"/>
</dbReference>
<dbReference type="GO" id="GO:1990904">
    <property type="term" value="C:ribonucleoprotein complex"/>
    <property type="evidence" value="ECO:0007669"/>
    <property type="project" value="UniProtKB-KW"/>
</dbReference>
<dbReference type="GO" id="GO:0005840">
    <property type="term" value="C:ribosome"/>
    <property type="evidence" value="ECO:0007669"/>
    <property type="project" value="UniProtKB-KW"/>
</dbReference>
<dbReference type="GO" id="GO:0019843">
    <property type="term" value="F:rRNA binding"/>
    <property type="evidence" value="ECO:0007669"/>
    <property type="project" value="UniProtKB-UniRule"/>
</dbReference>
<dbReference type="GO" id="GO:0003735">
    <property type="term" value="F:structural constituent of ribosome"/>
    <property type="evidence" value="ECO:0007669"/>
    <property type="project" value="InterPro"/>
</dbReference>
<dbReference type="GO" id="GO:0006412">
    <property type="term" value="P:translation"/>
    <property type="evidence" value="ECO:0007669"/>
    <property type="project" value="UniProtKB-UniRule"/>
</dbReference>
<dbReference type="HAMAP" id="MF_01363">
    <property type="entry name" value="Ribosomal_bL21"/>
    <property type="match status" value="1"/>
</dbReference>
<dbReference type="InterPro" id="IPR028909">
    <property type="entry name" value="bL21-like"/>
</dbReference>
<dbReference type="InterPro" id="IPR036164">
    <property type="entry name" value="bL21-like_sf"/>
</dbReference>
<dbReference type="InterPro" id="IPR001787">
    <property type="entry name" value="Ribosomal_bL21"/>
</dbReference>
<dbReference type="InterPro" id="IPR018258">
    <property type="entry name" value="Ribosomal_bL21_CS"/>
</dbReference>
<dbReference type="NCBIfam" id="TIGR00061">
    <property type="entry name" value="L21"/>
    <property type="match status" value="1"/>
</dbReference>
<dbReference type="PANTHER" id="PTHR21349">
    <property type="entry name" value="50S RIBOSOMAL PROTEIN L21"/>
    <property type="match status" value="1"/>
</dbReference>
<dbReference type="PANTHER" id="PTHR21349:SF0">
    <property type="entry name" value="LARGE RIBOSOMAL SUBUNIT PROTEIN BL21M"/>
    <property type="match status" value="1"/>
</dbReference>
<dbReference type="Pfam" id="PF00829">
    <property type="entry name" value="Ribosomal_L21p"/>
    <property type="match status" value="1"/>
</dbReference>
<dbReference type="SUPFAM" id="SSF141091">
    <property type="entry name" value="L21p-like"/>
    <property type="match status" value="1"/>
</dbReference>
<dbReference type="PROSITE" id="PS01169">
    <property type="entry name" value="RIBOSOMAL_L21"/>
    <property type="match status" value="1"/>
</dbReference>
<comment type="function">
    <text evidence="1">This protein binds to 23S rRNA in the presence of protein L20.</text>
</comment>
<comment type="subunit">
    <text evidence="1">Part of the 50S ribosomal subunit. Contacts protein L20.</text>
</comment>
<comment type="similarity">
    <text evidence="1">Belongs to the bacterial ribosomal protein bL21 family.</text>
</comment>
<reference key="1">
    <citation type="journal article" date="2006" name="PLoS Genet.">
        <title>Comparative genomics of emerging human ehrlichiosis agents.</title>
        <authorList>
            <person name="Dunning Hotopp J.C."/>
            <person name="Lin M."/>
            <person name="Madupu R."/>
            <person name="Crabtree J."/>
            <person name="Angiuoli S.V."/>
            <person name="Eisen J.A."/>
            <person name="Seshadri R."/>
            <person name="Ren Q."/>
            <person name="Wu M."/>
            <person name="Utterback T.R."/>
            <person name="Smith S."/>
            <person name="Lewis M."/>
            <person name="Khouri H."/>
            <person name="Zhang C."/>
            <person name="Niu H."/>
            <person name="Lin Q."/>
            <person name="Ohashi N."/>
            <person name="Zhi N."/>
            <person name="Nelson W.C."/>
            <person name="Brinkac L.M."/>
            <person name="Dodson R.J."/>
            <person name="Rosovitz M.J."/>
            <person name="Sundaram J.P."/>
            <person name="Daugherty S.C."/>
            <person name="Davidsen T."/>
            <person name="Durkin A.S."/>
            <person name="Gwinn M.L."/>
            <person name="Haft D.H."/>
            <person name="Selengut J.D."/>
            <person name="Sullivan S.A."/>
            <person name="Zafar N."/>
            <person name="Zhou L."/>
            <person name="Benahmed F."/>
            <person name="Forberger H."/>
            <person name="Halpin R."/>
            <person name="Mulligan S."/>
            <person name="Robinson J."/>
            <person name="White O."/>
            <person name="Rikihisa Y."/>
            <person name="Tettelin H."/>
        </authorList>
    </citation>
    <scope>NUCLEOTIDE SEQUENCE [LARGE SCALE GENOMIC DNA]</scope>
    <source>
        <strain>HZ</strain>
    </source>
</reference>
<name>RL21_ANAPZ</name>
<protein>
    <recommendedName>
        <fullName evidence="1">Large ribosomal subunit protein bL21</fullName>
    </recommendedName>
    <alternativeName>
        <fullName evidence="2">50S ribosomal protein L21</fullName>
    </alternativeName>
</protein>
<keyword id="KW-0687">Ribonucleoprotein</keyword>
<keyword id="KW-0689">Ribosomal protein</keyword>
<keyword id="KW-0694">RNA-binding</keyword>
<keyword id="KW-0699">rRNA-binding</keyword>
<sequence length="99" mass="11081">MFAVVETGGKQYKVKEQDVIKVELLKAGIGEKVLLKSLATFNNDGSGSFSASSGSVSAEVVAHCRSDKIIVFKKRRRKNYRRKNGHRQNMTVLRVVEVR</sequence>
<organism>
    <name type="scientific">Anaplasma phagocytophilum (strain HZ)</name>
    <dbReference type="NCBI Taxonomy" id="212042"/>
    <lineage>
        <taxon>Bacteria</taxon>
        <taxon>Pseudomonadati</taxon>
        <taxon>Pseudomonadota</taxon>
        <taxon>Alphaproteobacteria</taxon>
        <taxon>Rickettsiales</taxon>
        <taxon>Anaplasmataceae</taxon>
        <taxon>Anaplasma</taxon>
        <taxon>phagocytophilum group</taxon>
    </lineage>
</organism>
<evidence type="ECO:0000255" key="1">
    <source>
        <dbReference type="HAMAP-Rule" id="MF_01363"/>
    </source>
</evidence>
<evidence type="ECO:0000305" key="2"/>
<feature type="chain" id="PRO_0000269273" description="Large ribosomal subunit protein bL21">
    <location>
        <begin position="1"/>
        <end position="99"/>
    </location>
</feature>